<keyword id="KW-0378">Hydrolase</keyword>
<dbReference type="EC" id="3.6.1.-" evidence="1"/>
<dbReference type="EMBL" id="CP000958">
    <property type="protein sequence ID" value="ACA89734.1"/>
    <property type="molecule type" value="Genomic_DNA"/>
</dbReference>
<dbReference type="RefSeq" id="WP_012327866.1">
    <property type="nucleotide sequence ID" value="NC_010508.1"/>
</dbReference>
<dbReference type="SMR" id="B1JVA4"/>
<dbReference type="GeneID" id="83047358"/>
<dbReference type="KEGG" id="bcm:Bcenmc03_0556"/>
<dbReference type="HOGENOM" id="CLU_087195_0_1_4"/>
<dbReference type="Proteomes" id="UP000002169">
    <property type="component" value="Chromosome 1"/>
</dbReference>
<dbReference type="GO" id="GO:0016462">
    <property type="term" value="F:pyrophosphatase activity"/>
    <property type="evidence" value="ECO:0007669"/>
    <property type="project" value="UniProtKB-ARBA"/>
</dbReference>
<dbReference type="CDD" id="cd03671">
    <property type="entry name" value="NUDIX_Ap4A_hydrolase_plant_like"/>
    <property type="match status" value="1"/>
</dbReference>
<dbReference type="Gene3D" id="3.90.79.10">
    <property type="entry name" value="Nucleoside Triphosphate Pyrophosphohydrolase"/>
    <property type="match status" value="1"/>
</dbReference>
<dbReference type="HAMAP" id="MF_00298">
    <property type="entry name" value="Nudix_RppH"/>
    <property type="match status" value="1"/>
</dbReference>
<dbReference type="InterPro" id="IPR020476">
    <property type="entry name" value="Nudix_hydrolase"/>
</dbReference>
<dbReference type="InterPro" id="IPR015797">
    <property type="entry name" value="NUDIX_hydrolase-like_dom_sf"/>
</dbReference>
<dbReference type="InterPro" id="IPR020084">
    <property type="entry name" value="NUDIX_hydrolase_CS"/>
</dbReference>
<dbReference type="InterPro" id="IPR000086">
    <property type="entry name" value="NUDIX_hydrolase_dom"/>
</dbReference>
<dbReference type="InterPro" id="IPR022927">
    <property type="entry name" value="RppH"/>
</dbReference>
<dbReference type="NCBIfam" id="NF001935">
    <property type="entry name" value="PRK00714.1-2"/>
    <property type="match status" value="1"/>
</dbReference>
<dbReference type="NCBIfam" id="NF001937">
    <property type="entry name" value="PRK00714.1-4"/>
    <property type="match status" value="1"/>
</dbReference>
<dbReference type="NCBIfam" id="NF001938">
    <property type="entry name" value="PRK00714.1-5"/>
    <property type="match status" value="1"/>
</dbReference>
<dbReference type="PANTHER" id="PTHR43736">
    <property type="entry name" value="ADP-RIBOSE PYROPHOSPHATASE"/>
    <property type="match status" value="1"/>
</dbReference>
<dbReference type="PANTHER" id="PTHR43736:SF1">
    <property type="entry name" value="DIHYDRONEOPTERIN TRIPHOSPHATE DIPHOSPHATASE"/>
    <property type="match status" value="1"/>
</dbReference>
<dbReference type="Pfam" id="PF00293">
    <property type="entry name" value="NUDIX"/>
    <property type="match status" value="1"/>
</dbReference>
<dbReference type="PRINTS" id="PR00502">
    <property type="entry name" value="NUDIXFAMILY"/>
</dbReference>
<dbReference type="SUPFAM" id="SSF55811">
    <property type="entry name" value="Nudix"/>
    <property type="match status" value="1"/>
</dbReference>
<dbReference type="PROSITE" id="PS51462">
    <property type="entry name" value="NUDIX"/>
    <property type="match status" value="1"/>
</dbReference>
<dbReference type="PROSITE" id="PS00893">
    <property type="entry name" value="NUDIX_BOX"/>
    <property type="match status" value="1"/>
</dbReference>
<sequence length="214" mass="25341">MLDREGFRPNVGIILLNARNEVFWGKRLREHSWQFPQGGIKYGETPMQAMYRELHEETGLHPEHVKIIGRTRDWLRYEVPDKFIKREVRGHYRGQKQIWFLLRMVGRDCDICLRATDHPEFDAWRWNEYWVPLDAVIEFKRDVYQLALTELSRFLRRPAQRAEKPRGPRMSRYPRVIGAQAQTLTIVDTSVVCSEIEVEASTLDEMPPHVIVGK</sequence>
<comment type="function">
    <text evidence="1">Accelerates the degradation of transcripts by removing pyrophosphate from the 5'-end of triphosphorylated RNA, leading to a more labile monophosphorylated state that can stimulate subsequent ribonuclease cleavage.</text>
</comment>
<comment type="cofactor">
    <cofactor evidence="1">
        <name>a divalent metal cation</name>
        <dbReference type="ChEBI" id="CHEBI:60240"/>
    </cofactor>
</comment>
<comment type="similarity">
    <text evidence="1">Belongs to the Nudix hydrolase family. RppH subfamily.</text>
</comment>
<protein>
    <recommendedName>
        <fullName evidence="1">RNA pyrophosphohydrolase</fullName>
        <ecNumber evidence="1">3.6.1.-</ecNumber>
    </recommendedName>
    <alternativeName>
        <fullName evidence="1">(Di)nucleoside polyphosphate hydrolase</fullName>
    </alternativeName>
</protein>
<name>RPPH_BURO0</name>
<accession>B1JVA4</accession>
<gene>
    <name evidence="1" type="primary">rppH</name>
    <name evidence="1" type="synonym">nudH</name>
    <name type="ordered locus">Bcenmc03_0556</name>
</gene>
<proteinExistence type="inferred from homology"/>
<reference key="1">
    <citation type="submission" date="2008-02" db="EMBL/GenBank/DDBJ databases">
        <title>Complete sequence of chromosome 1 of Burkholderia cenocepacia MC0-3.</title>
        <authorList>
            <person name="Copeland A."/>
            <person name="Lucas S."/>
            <person name="Lapidus A."/>
            <person name="Barry K."/>
            <person name="Bruce D."/>
            <person name="Goodwin L."/>
            <person name="Glavina del Rio T."/>
            <person name="Dalin E."/>
            <person name="Tice H."/>
            <person name="Pitluck S."/>
            <person name="Chain P."/>
            <person name="Malfatti S."/>
            <person name="Shin M."/>
            <person name="Vergez L."/>
            <person name="Schmutz J."/>
            <person name="Larimer F."/>
            <person name="Land M."/>
            <person name="Hauser L."/>
            <person name="Kyrpides N."/>
            <person name="Mikhailova N."/>
            <person name="Tiedje J."/>
            <person name="Richardson P."/>
        </authorList>
    </citation>
    <scope>NUCLEOTIDE SEQUENCE [LARGE SCALE GENOMIC DNA]</scope>
    <source>
        <strain>MC0-3</strain>
    </source>
</reference>
<feature type="chain" id="PRO_1000115268" description="RNA pyrophosphohydrolase">
    <location>
        <begin position="1"/>
        <end position="214"/>
    </location>
</feature>
<feature type="domain" description="Nudix hydrolase" evidence="1">
    <location>
        <begin position="6"/>
        <end position="149"/>
    </location>
</feature>
<feature type="short sequence motif" description="Nudix box">
    <location>
        <begin position="38"/>
        <end position="59"/>
    </location>
</feature>
<evidence type="ECO:0000255" key="1">
    <source>
        <dbReference type="HAMAP-Rule" id="MF_00298"/>
    </source>
</evidence>
<organism>
    <name type="scientific">Burkholderia orbicola (strain MC0-3)</name>
    <dbReference type="NCBI Taxonomy" id="406425"/>
    <lineage>
        <taxon>Bacteria</taxon>
        <taxon>Pseudomonadati</taxon>
        <taxon>Pseudomonadota</taxon>
        <taxon>Betaproteobacteria</taxon>
        <taxon>Burkholderiales</taxon>
        <taxon>Burkholderiaceae</taxon>
        <taxon>Burkholderia</taxon>
        <taxon>Burkholderia cepacia complex</taxon>
        <taxon>Burkholderia orbicola</taxon>
    </lineage>
</organism>